<name>YOPJ_BACSU</name>
<sequence>MKNTFLYFRWEDLHGEIGVDSFNLLRASYSNLSEQQLVELIKELISIEREDIAAKFDIHLSENAPVFDERQHVVYKGVAGDMNYKDMLLSLVTALDLTNTLDHVQNILSLAKCLRSFDREIFARFAKDIAEEVYYSLK</sequence>
<protein>
    <recommendedName>
        <fullName>SPbeta prophage-derived uncharacterized protein YopJ</fullName>
    </recommendedName>
</protein>
<keyword id="KW-1185">Reference proteome</keyword>
<accession>O31928</accession>
<gene>
    <name type="primary">yopJ</name>
    <name type="ordered locus">BSU20870</name>
</gene>
<organism>
    <name type="scientific">Bacillus subtilis (strain 168)</name>
    <dbReference type="NCBI Taxonomy" id="224308"/>
    <lineage>
        <taxon>Bacteria</taxon>
        <taxon>Bacillati</taxon>
        <taxon>Bacillota</taxon>
        <taxon>Bacilli</taxon>
        <taxon>Bacillales</taxon>
        <taxon>Bacillaceae</taxon>
        <taxon>Bacillus</taxon>
    </lineage>
</organism>
<feature type="chain" id="PRO_0000360467" description="SPbeta prophage-derived uncharacterized protein YopJ">
    <location>
        <begin position="1"/>
        <end position="138"/>
    </location>
</feature>
<reference key="1">
    <citation type="journal article" date="1997" name="Nature">
        <title>The complete genome sequence of the Gram-positive bacterium Bacillus subtilis.</title>
        <authorList>
            <person name="Kunst F."/>
            <person name="Ogasawara N."/>
            <person name="Moszer I."/>
            <person name="Albertini A.M."/>
            <person name="Alloni G."/>
            <person name="Azevedo V."/>
            <person name="Bertero M.G."/>
            <person name="Bessieres P."/>
            <person name="Bolotin A."/>
            <person name="Borchert S."/>
            <person name="Borriss R."/>
            <person name="Boursier L."/>
            <person name="Brans A."/>
            <person name="Braun M."/>
            <person name="Brignell S.C."/>
            <person name="Bron S."/>
            <person name="Brouillet S."/>
            <person name="Bruschi C.V."/>
            <person name="Caldwell B."/>
            <person name="Capuano V."/>
            <person name="Carter N.M."/>
            <person name="Choi S.-K."/>
            <person name="Codani J.-J."/>
            <person name="Connerton I.F."/>
            <person name="Cummings N.J."/>
            <person name="Daniel R.A."/>
            <person name="Denizot F."/>
            <person name="Devine K.M."/>
            <person name="Duesterhoeft A."/>
            <person name="Ehrlich S.D."/>
            <person name="Emmerson P.T."/>
            <person name="Entian K.-D."/>
            <person name="Errington J."/>
            <person name="Fabret C."/>
            <person name="Ferrari E."/>
            <person name="Foulger D."/>
            <person name="Fritz C."/>
            <person name="Fujita M."/>
            <person name="Fujita Y."/>
            <person name="Fuma S."/>
            <person name="Galizzi A."/>
            <person name="Galleron N."/>
            <person name="Ghim S.-Y."/>
            <person name="Glaser P."/>
            <person name="Goffeau A."/>
            <person name="Golightly E.J."/>
            <person name="Grandi G."/>
            <person name="Guiseppi G."/>
            <person name="Guy B.J."/>
            <person name="Haga K."/>
            <person name="Haiech J."/>
            <person name="Harwood C.R."/>
            <person name="Henaut A."/>
            <person name="Hilbert H."/>
            <person name="Holsappel S."/>
            <person name="Hosono S."/>
            <person name="Hullo M.-F."/>
            <person name="Itaya M."/>
            <person name="Jones L.-M."/>
            <person name="Joris B."/>
            <person name="Karamata D."/>
            <person name="Kasahara Y."/>
            <person name="Klaerr-Blanchard M."/>
            <person name="Klein C."/>
            <person name="Kobayashi Y."/>
            <person name="Koetter P."/>
            <person name="Koningstein G."/>
            <person name="Krogh S."/>
            <person name="Kumano M."/>
            <person name="Kurita K."/>
            <person name="Lapidus A."/>
            <person name="Lardinois S."/>
            <person name="Lauber J."/>
            <person name="Lazarevic V."/>
            <person name="Lee S.-M."/>
            <person name="Levine A."/>
            <person name="Liu H."/>
            <person name="Masuda S."/>
            <person name="Mauel C."/>
            <person name="Medigue C."/>
            <person name="Medina N."/>
            <person name="Mellado R.P."/>
            <person name="Mizuno M."/>
            <person name="Moestl D."/>
            <person name="Nakai S."/>
            <person name="Noback M."/>
            <person name="Noone D."/>
            <person name="O'Reilly M."/>
            <person name="Ogawa K."/>
            <person name="Ogiwara A."/>
            <person name="Oudega B."/>
            <person name="Park S.-H."/>
            <person name="Parro V."/>
            <person name="Pohl T.M."/>
            <person name="Portetelle D."/>
            <person name="Porwollik S."/>
            <person name="Prescott A.M."/>
            <person name="Presecan E."/>
            <person name="Pujic P."/>
            <person name="Purnelle B."/>
            <person name="Rapoport G."/>
            <person name="Rey M."/>
            <person name="Reynolds S."/>
            <person name="Rieger M."/>
            <person name="Rivolta C."/>
            <person name="Rocha E."/>
            <person name="Roche B."/>
            <person name="Rose M."/>
            <person name="Sadaie Y."/>
            <person name="Sato T."/>
            <person name="Scanlan E."/>
            <person name="Schleich S."/>
            <person name="Schroeter R."/>
            <person name="Scoffone F."/>
            <person name="Sekiguchi J."/>
            <person name="Sekowska A."/>
            <person name="Seror S.J."/>
            <person name="Serror P."/>
            <person name="Shin B.-S."/>
            <person name="Soldo B."/>
            <person name="Sorokin A."/>
            <person name="Tacconi E."/>
            <person name="Takagi T."/>
            <person name="Takahashi H."/>
            <person name="Takemaru K."/>
            <person name="Takeuchi M."/>
            <person name="Tamakoshi A."/>
            <person name="Tanaka T."/>
            <person name="Terpstra P."/>
            <person name="Tognoni A."/>
            <person name="Tosato V."/>
            <person name="Uchiyama S."/>
            <person name="Vandenbol M."/>
            <person name="Vannier F."/>
            <person name="Vassarotti A."/>
            <person name="Viari A."/>
            <person name="Wambutt R."/>
            <person name="Wedler E."/>
            <person name="Wedler H."/>
            <person name="Weitzenegger T."/>
            <person name="Winters P."/>
            <person name="Wipat A."/>
            <person name="Yamamoto H."/>
            <person name="Yamane K."/>
            <person name="Yasumoto K."/>
            <person name="Yata K."/>
            <person name="Yoshida K."/>
            <person name="Yoshikawa H.-F."/>
            <person name="Zumstein E."/>
            <person name="Yoshikawa H."/>
            <person name="Danchin A."/>
        </authorList>
    </citation>
    <scope>NUCLEOTIDE SEQUENCE [LARGE SCALE GENOMIC DNA]</scope>
    <source>
        <strain>168</strain>
    </source>
</reference>
<dbReference type="EMBL" id="AL009126">
    <property type="protein sequence ID" value="CAB14005.1"/>
    <property type="molecule type" value="Genomic_DNA"/>
</dbReference>
<dbReference type="RefSeq" id="NP_389969.1">
    <property type="nucleotide sequence ID" value="NC_000964.3"/>
</dbReference>
<dbReference type="RefSeq" id="WP_004399583.1">
    <property type="nucleotide sequence ID" value="NZ_OZ025638.1"/>
</dbReference>
<dbReference type="FunCoup" id="O31928">
    <property type="interactions" value="110"/>
</dbReference>
<dbReference type="STRING" id="224308.BSU20870"/>
<dbReference type="PaxDb" id="224308-BSU20870"/>
<dbReference type="EnsemblBacteria" id="CAB14005">
    <property type="protein sequence ID" value="CAB14005"/>
    <property type="gene ID" value="BSU_20870"/>
</dbReference>
<dbReference type="GeneID" id="939184"/>
<dbReference type="KEGG" id="bsu:BSU20870"/>
<dbReference type="PATRIC" id="fig|224308.179.peg.2277"/>
<dbReference type="InParanoid" id="O31928"/>
<dbReference type="OrthoDB" id="2899070at2"/>
<dbReference type="BioCyc" id="BSUB:BSU20870-MONOMER"/>
<dbReference type="Proteomes" id="UP000001570">
    <property type="component" value="Chromosome"/>
</dbReference>
<proteinExistence type="predicted"/>